<reference key="1">
    <citation type="journal article" date="2007" name="Nat. Biotechnol.">
        <title>Complete genome sequence of the myxobacterium Sorangium cellulosum.</title>
        <authorList>
            <person name="Schneiker S."/>
            <person name="Perlova O."/>
            <person name="Kaiser O."/>
            <person name="Gerth K."/>
            <person name="Alici A."/>
            <person name="Altmeyer M.O."/>
            <person name="Bartels D."/>
            <person name="Bekel T."/>
            <person name="Beyer S."/>
            <person name="Bode E."/>
            <person name="Bode H.B."/>
            <person name="Bolten C.J."/>
            <person name="Choudhuri J.V."/>
            <person name="Doss S."/>
            <person name="Elnakady Y.A."/>
            <person name="Frank B."/>
            <person name="Gaigalat L."/>
            <person name="Goesmann A."/>
            <person name="Groeger C."/>
            <person name="Gross F."/>
            <person name="Jelsbak L."/>
            <person name="Jelsbak L."/>
            <person name="Kalinowski J."/>
            <person name="Kegler C."/>
            <person name="Knauber T."/>
            <person name="Konietzny S."/>
            <person name="Kopp M."/>
            <person name="Krause L."/>
            <person name="Krug D."/>
            <person name="Linke B."/>
            <person name="Mahmud T."/>
            <person name="Martinez-Arias R."/>
            <person name="McHardy A.C."/>
            <person name="Merai M."/>
            <person name="Meyer F."/>
            <person name="Mormann S."/>
            <person name="Munoz-Dorado J."/>
            <person name="Perez J."/>
            <person name="Pradella S."/>
            <person name="Rachid S."/>
            <person name="Raddatz G."/>
            <person name="Rosenau F."/>
            <person name="Rueckert C."/>
            <person name="Sasse F."/>
            <person name="Scharfe M."/>
            <person name="Schuster S.C."/>
            <person name="Suen G."/>
            <person name="Treuner-Lange A."/>
            <person name="Velicer G.J."/>
            <person name="Vorholter F.-J."/>
            <person name="Weissman K.J."/>
            <person name="Welch R.D."/>
            <person name="Wenzel S.C."/>
            <person name="Whitworth D.E."/>
            <person name="Wilhelm S."/>
            <person name="Wittmann C."/>
            <person name="Bloecker H."/>
            <person name="Puehler A."/>
            <person name="Mueller R."/>
        </authorList>
    </citation>
    <scope>NUCLEOTIDE SEQUENCE [LARGE SCALE GENOMIC DNA]</scope>
    <source>
        <strain>So ce56</strain>
    </source>
</reference>
<keyword id="KW-0143">Chaperone</keyword>
<keyword id="KW-0963">Cytoplasm</keyword>
<keyword id="KW-0342">GTP-binding</keyword>
<keyword id="KW-0996">Nickel insertion</keyword>
<keyword id="KW-0547">Nucleotide-binding</keyword>
<keyword id="KW-1185">Reference proteome</keyword>
<feature type="chain" id="PRO_0000347447" description="Urease accessory protein UreG">
    <location>
        <begin position="1"/>
        <end position="302"/>
    </location>
</feature>
<feature type="region of interest" description="Disordered" evidence="2">
    <location>
        <begin position="1"/>
        <end position="76"/>
    </location>
</feature>
<feature type="compositionally biased region" description="Basic and acidic residues" evidence="2">
    <location>
        <begin position="1"/>
        <end position="32"/>
    </location>
</feature>
<feature type="compositionally biased region" description="Basic and acidic residues" evidence="2">
    <location>
        <begin position="40"/>
        <end position="56"/>
    </location>
</feature>
<feature type="compositionally biased region" description="Basic and acidic residues" evidence="2">
    <location>
        <begin position="64"/>
        <end position="76"/>
    </location>
</feature>
<feature type="binding site" evidence="1">
    <location>
        <begin position="105"/>
        <end position="112"/>
    </location>
    <ligand>
        <name>GTP</name>
        <dbReference type="ChEBI" id="CHEBI:37565"/>
    </ligand>
</feature>
<sequence>MHDPGEHGHGRHDHDHDHDHVHDHDHDHDHVHGGGHRHAHEHEHAHEHAHGHEHGHAHAHAHAHAHEHAHGHTHEHWAHPGLFSERDAPKDRDFSARAFTVGIGGPVGSGKTALVLALCRALRDRMPLGVVTNDIFTQEDAEFLHRNKALPPERIRAVETGGCPHAAIREDISHNLVALDDLMDHVAPALLIVESGGDNLAAQYSRELVDYTIYVIDVAGGDKVPRKGGPGITQSDLLVINKTDLAPHVGADLGVMERDARRMRGDGPFLFAQCNRSQGVPEIIDHILSAMRRATTTAPPAK</sequence>
<accession>A9GP90</accession>
<evidence type="ECO:0000255" key="1">
    <source>
        <dbReference type="HAMAP-Rule" id="MF_01389"/>
    </source>
</evidence>
<evidence type="ECO:0000256" key="2">
    <source>
        <dbReference type="SAM" id="MobiDB-lite"/>
    </source>
</evidence>
<organism>
    <name type="scientific">Sorangium cellulosum (strain So ce56)</name>
    <name type="common">Polyangium cellulosum (strain So ce56)</name>
    <dbReference type="NCBI Taxonomy" id="448385"/>
    <lineage>
        <taxon>Bacteria</taxon>
        <taxon>Pseudomonadati</taxon>
        <taxon>Myxococcota</taxon>
        <taxon>Polyangia</taxon>
        <taxon>Polyangiales</taxon>
        <taxon>Polyangiaceae</taxon>
        <taxon>Sorangium</taxon>
    </lineage>
</organism>
<dbReference type="EMBL" id="AM746676">
    <property type="protein sequence ID" value="CAN96720.1"/>
    <property type="molecule type" value="Genomic_DNA"/>
</dbReference>
<dbReference type="RefSeq" id="WP_012239169.1">
    <property type="nucleotide sequence ID" value="NC_010162.1"/>
</dbReference>
<dbReference type="SMR" id="A9GP90"/>
<dbReference type="STRING" id="448385.sce6551"/>
<dbReference type="KEGG" id="scl:sce6551"/>
<dbReference type="eggNOG" id="COG0378">
    <property type="taxonomic scope" value="Bacteria"/>
</dbReference>
<dbReference type="HOGENOM" id="CLU_072144_0_0_7"/>
<dbReference type="OrthoDB" id="9802035at2"/>
<dbReference type="BioCyc" id="SCEL448385:SCE_RS33610-MONOMER"/>
<dbReference type="Proteomes" id="UP000002139">
    <property type="component" value="Chromosome"/>
</dbReference>
<dbReference type="GO" id="GO:0005737">
    <property type="term" value="C:cytoplasm"/>
    <property type="evidence" value="ECO:0007669"/>
    <property type="project" value="UniProtKB-SubCell"/>
</dbReference>
<dbReference type="GO" id="GO:0005525">
    <property type="term" value="F:GTP binding"/>
    <property type="evidence" value="ECO:0007669"/>
    <property type="project" value="UniProtKB-KW"/>
</dbReference>
<dbReference type="GO" id="GO:0003924">
    <property type="term" value="F:GTPase activity"/>
    <property type="evidence" value="ECO:0007669"/>
    <property type="project" value="InterPro"/>
</dbReference>
<dbReference type="GO" id="GO:0016151">
    <property type="term" value="F:nickel cation binding"/>
    <property type="evidence" value="ECO:0007669"/>
    <property type="project" value="InterPro"/>
</dbReference>
<dbReference type="GO" id="GO:0043419">
    <property type="term" value="P:urea catabolic process"/>
    <property type="evidence" value="ECO:0007669"/>
    <property type="project" value="InterPro"/>
</dbReference>
<dbReference type="CDD" id="cd05540">
    <property type="entry name" value="UreG"/>
    <property type="match status" value="1"/>
</dbReference>
<dbReference type="FunFam" id="3.40.50.300:FF:000208">
    <property type="entry name" value="Urease accessory protein UreG"/>
    <property type="match status" value="1"/>
</dbReference>
<dbReference type="Gene3D" id="3.40.50.300">
    <property type="entry name" value="P-loop containing nucleotide triphosphate hydrolases"/>
    <property type="match status" value="1"/>
</dbReference>
<dbReference type="HAMAP" id="MF_01389">
    <property type="entry name" value="UreG"/>
    <property type="match status" value="1"/>
</dbReference>
<dbReference type="InterPro" id="IPR003495">
    <property type="entry name" value="CobW/HypB/UreG_nucleotide-bd"/>
</dbReference>
<dbReference type="InterPro" id="IPR027417">
    <property type="entry name" value="P-loop_NTPase"/>
</dbReference>
<dbReference type="InterPro" id="IPR004400">
    <property type="entry name" value="UreG"/>
</dbReference>
<dbReference type="NCBIfam" id="TIGR00101">
    <property type="entry name" value="ureG"/>
    <property type="match status" value="1"/>
</dbReference>
<dbReference type="PANTHER" id="PTHR31715">
    <property type="entry name" value="UREASE ACCESSORY PROTEIN G"/>
    <property type="match status" value="1"/>
</dbReference>
<dbReference type="PANTHER" id="PTHR31715:SF0">
    <property type="entry name" value="UREASE ACCESSORY PROTEIN G"/>
    <property type="match status" value="1"/>
</dbReference>
<dbReference type="Pfam" id="PF02492">
    <property type="entry name" value="cobW"/>
    <property type="match status" value="1"/>
</dbReference>
<dbReference type="SUPFAM" id="SSF52540">
    <property type="entry name" value="P-loop containing nucleoside triphosphate hydrolases"/>
    <property type="match status" value="1"/>
</dbReference>
<gene>
    <name evidence="1" type="primary">ureG</name>
    <name type="ordered locus">sce6551</name>
</gene>
<protein>
    <recommendedName>
        <fullName evidence="1">Urease accessory protein UreG</fullName>
    </recommendedName>
</protein>
<name>UREG_SORC5</name>
<comment type="function">
    <text evidence="1">Facilitates the functional incorporation of the urease nickel metallocenter. This process requires GTP hydrolysis, probably effectuated by UreG.</text>
</comment>
<comment type="subunit">
    <text evidence="1">Homodimer. UreD, UreF and UreG form a complex that acts as a GTP-hydrolysis-dependent molecular chaperone, activating the urease apoprotein by helping to assemble the nickel containing metallocenter of UreC. The UreE protein probably delivers the nickel.</text>
</comment>
<comment type="subcellular location">
    <subcellularLocation>
        <location evidence="1">Cytoplasm</location>
    </subcellularLocation>
</comment>
<comment type="similarity">
    <text evidence="1">Belongs to the SIMIBI class G3E GTPase family. UreG subfamily.</text>
</comment>
<proteinExistence type="inferred from homology"/>